<comment type="function">
    <text evidence="1">The UvrABC repair system catalyzes the recognition and processing of DNA lesions. UvrC both incises the 5' and 3' sides of the lesion. The N-terminal half is responsible for the 3' incision and the C-terminal half is responsible for the 5' incision.</text>
</comment>
<comment type="subunit">
    <text evidence="1">Interacts with UvrB in an incision complex.</text>
</comment>
<comment type="subcellular location">
    <subcellularLocation>
        <location evidence="1">Cytoplasm</location>
    </subcellularLocation>
</comment>
<comment type="similarity">
    <text evidence="1">Belongs to the UvrC family.</text>
</comment>
<accession>B0BYA6</accession>
<sequence length="639" mass="73408">MTLEITGSELIKSKLIDAPERSGVYRMFDVNKQVLYVGKAKNLKKRLTNYIKSNLDNKTLRMIANTCFLEYSITNSEVEALLLEAQLIKKFQPKFNILLKDCKSFPFIKLRLEHDFPQLLKYRGKTLSDGKFFGPFASSVDVNTTLTELQKIFKLRSCTDNYFNSRTRPCLQYEIKRCYAPCVGKINKEDYRDLVTQVKDFLQGRTKELQENLSRKMEELSSQMRFEEAAEIRDRIKALSYVQLKAGVSDVVKDADIIAIVEKNGHYCVEVFLYRAGQACGNIPYFPTSTENSTKEEVLEYFLLQFYQKQHVPAAIIINHEINDKENVIEAIKKINNILQLNITVPNKGGKAKLVQNAEINALFSLEQYLKKFAKNQEIIFEIKELFGLSAIPERIEIYDNSHIQGKFAVGVMVVAGKVGFDKKEYRVFNVYAPSLVCHSRESGDPKRLMDSCFRGNGIKNCWGDIKGDDYEMLRQVLTRRLTRLRQEPHKLPSLMIIDGGKGHLGVVKEVMDKFEMNIPFVCMSKGVDRNAGFEQFHVIGKEVFTLDKNLPVMKYLQILRDEAHNFAIKNHRLGRSRAIKISRLDDIEGVGETRKKALLHYFGSYKAVCDATIYELAKVNGINKLLAEMIFNVLHRKN</sequence>
<proteinExistence type="inferred from homology"/>
<organism>
    <name type="scientific">Rickettsia rickettsii (strain Iowa)</name>
    <dbReference type="NCBI Taxonomy" id="452659"/>
    <lineage>
        <taxon>Bacteria</taxon>
        <taxon>Pseudomonadati</taxon>
        <taxon>Pseudomonadota</taxon>
        <taxon>Alphaproteobacteria</taxon>
        <taxon>Rickettsiales</taxon>
        <taxon>Rickettsiaceae</taxon>
        <taxon>Rickettsieae</taxon>
        <taxon>Rickettsia</taxon>
        <taxon>spotted fever group</taxon>
    </lineage>
</organism>
<reference key="1">
    <citation type="journal article" date="2008" name="Infect. Immun.">
        <title>Genomic comparison of virulent Rickettsia rickettsii Sheila Smith and avirulent Rickettsia rickettsii Iowa.</title>
        <authorList>
            <person name="Ellison D.W."/>
            <person name="Clark T.R."/>
            <person name="Sturdevant D.E."/>
            <person name="Virtaneva K."/>
            <person name="Porcella S.F."/>
            <person name="Hackstadt T."/>
        </authorList>
    </citation>
    <scope>NUCLEOTIDE SEQUENCE [LARGE SCALE GENOMIC DNA]</scope>
    <source>
        <strain>Iowa</strain>
    </source>
</reference>
<keyword id="KW-0963">Cytoplasm</keyword>
<keyword id="KW-0227">DNA damage</keyword>
<keyword id="KW-0228">DNA excision</keyword>
<keyword id="KW-0234">DNA repair</keyword>
<keyword id="KW-0267">Excision nuclease</keyword>
<keyword id="KW-0742">SOS response</keyword>
<dbReference type="EMBL" id="CP000766">
    <property type="protein sequence ID" value="ABY72832.1"/>
    <property type="molecule type" value="Genomic_DNA"/>
</dbReference>
<dbReference type="RefSeq" id="WP_012151028.1">
    <property type="nucleotide sequence ID" value="NC_010263.3"/>
</dbReference>
<dbReference type="SMR" id="B0BYA6"/>
<dbReference type="GeneID" id="79937554"/>
<dbReference type="KEGG" id="rrj:RrIowa_1026"/>
<dbReference type="eggNOG" id="COG0322">
    <property type="taxonomic scope" value="Bacteria"/>
</dbReference>
<dbReference type="HOGENOM" id="CLU_014841_3_2_5"/>
<dbReference type="Proteomes" id="UP000000796">
    <property type="component" value="Chromosome"/>
</dbReference>
<dbReference type="GO" id="GO:0005737">
    <property type="term" value="C:cytoplasm"/>
    <property type="evidence" value="ECO:0007669"/>
    <property type="project" value="UniProtKB-SubCell"/>
</dbReference>
<dbReference type="GO" id="GO:0009380">
    <property type="term" value="C:excinuclease repair complex"/>
    <property type="evidence" value="ECO:0007669"/>
    <property type="project" value="InterPro"/>
</dbReference>
<dbReference type="GO" id="GO:0003677">
    <property type="term" value="F:DNA binding"/>
    <property type="evidence" value="ECO:0007669"/>
    <property type="project" value="UniProtKB-UniRule"/>
</dbReference>
<dbReference type="GO" id="GO:0009381">
    <property type="term" value="F:excinuclease ABC activity"/>
    <property type="evidence" value="ECO:0007669"/>
    <property type="project" value="UniProtKB-UniRule"/>
</dbReference>
<dbReference type="GO" id="GO:0006289">
    <property type="term" value="P:nucleotide-excision repair"/>
    <property type="evidence" value="ECO:0007669"/>
    <property type="project" value="UniProtKB-UniRule"/>
</dbReference>
<dbReference type="GO" id="GO:0009432">
    <property type="term" value="P:SOS response"/>
    <property type="evidence" value="ECO:0007669"/>
    <property type="project" value="UniProtKB-UniRule"/>
</dbReference>
<dbReference type="CDD" id="cd10434">
    <property type="entry name" value="GIY-YIG_UvrC_Cho"/>
    <property type="match status" value="1"/>
</dbReference>
<dbReference type="FunFam" id="3.40.1440.10:FF:000001">
    <property type="entry name" value="UvrABC system protein C"/>
    <property type="match status" value="1"/>
</dbReference>
<dbReference type="Gene3D" id="1.10.150.20">
    <property type="entry name" value="5' to 3' exonuclease, C-terminal subdomain"/>
    <property type="match status" value="1"/>
</dbReference>
<dbReference type="Gene3D" id="3.40.1440.10">
    <property type="entry name" value="GIY-YIG endonuclease"/>
    <property type="match status" value="1"/>
</dbReference>
<dbReference type="Gene3D" id="4.10.860.10">
    <property type="entry name" value="UVR domain"/>
    <property type="match status" value="1"/>
</dbReference>
<dbReference type="Gene3D" id="3.30.420.340">
    <property type="entry name" value="UvrC, RNAse H endonuclease domain"/>
    <property type="match status" value="1"/>
</dbReference>
<dbReference type="HAMAP" id="MF_00203">
    <property type="entry name" value="UvrC"/>
    <property type="match status" value="1"/>
</dbReference>
<dbReference type="InterPro" id="IPR000305">
    <property type="entry name" value="GIY-YIG_endonuc"/>
</dbReference>
<dbReference type="InterPro" id="IPR035901">
    <property type="entry name" value="GIY-YIG_endonuc_sf"/>
</dbReference>
<dbReference type="InterPro" id="IPR047296">
    <property type="entry name" value="GIY-YIG_UvrC_Cho"/>
</dbReference>
<dbReference type="InterPro" id="IPR010994">
    <property type="entry name" value="RuvA_2-like"/>
</dbReference>
<dbReference type="InterPro" id="IPR001943">
    <property type="entry name" value="UVR_dom"/>
</dbReference>
<dbReference type="InterPro" id="IPR036876">
    <property type="entry name" value="UVR_dom_sf"/>
</dbReference>
<dbReference type="InterPro" id="IPR050066">
    <property type="entry name" value="UvrABC_protein_C"/>
</dbReference>
<dbReference type="InterPro" id="IPR004791">
    <property type="entry name" value="UvrC"/>
</dbReference>
<dbReference type="InterPro" id="IPR001162">
    <property type="entry name" value="UvrC_RNase_H_dom"/>
</dbReference>
<dbReference type="InterPro" id="IPR038476">
    <property type="entry name" value="UvrC_RNase_H_dom_sf"/>
</dbReference>
<dbReference type="NCBIfam" id="TIGR00194">
    <property type="entry name" value="uvrC"/>
    <property type="match status" value="1"/>
</dbReference>
<dbReference type="PANTHER" id="PTHR30562:SF1">
    <property type="entry name" value="UVRABC SYSTEM PROTEIN C"/>
    <property type="match status" value="1"/>
</dbReference>
<dbReference type="PANTHER" id="PTHR30562">
    <property type="entry name" value="UVRC/OXIDOREDUCTASE"/>
    <property type="match status" value="1"/>
</dbReference>
<dbReference type="Pfam" id="PF01541">
    <property type="entry name" value="GIY-YIG"/>
    <property type="match status" value="1"/>
</dbReference>
<dbReference type="Pfam" id="PF14520">
    <property type="entry name" value="HHH_5"/>
    <property type="match status" value="1"/>
</dbReference>
<dbReference type="Pfam" id="PF02151">
    <property type="entry name" value="UVR"/>
    <property type="match status" value="1"/>
</dbReference>
<dbReference type="Pfam" id="PF22920">
    <property type="entry name" value="UvrC_RNaseH"/>
    <property type="match status" value="1"/>
</dbReference>
<dbReference type="Pfam" id="PF08459">
    <property type="entry name" value="UvrC_RNaseH_dom"/>
    <property type="match status" value="2"/>
</dbReference>
<dbReference type="SMART" id="SM00465">
    <property type="entry name" value="GIYc"/>
    <property type="match status" value="1"/>
</dbReference>
<dbReference type="SUPFAM" id="SSF46600">
    <property type="entry name" value="C-terminal UvrC-binding domain of UvrB"/>
    <property type="match status" value="1"/>
</dbReference>
<dbReference type="SUPFAM" id="SSF82771">
    <property type="entry name" value="GIY-YIG endonuclease"/>
    <property type="match status" value="1"/>
</dbReference>
<dbReference type="SUPFAM" id="SSF47781">
    <property type="entry name" value="RuvA domain 2-like"/>
    <property type="match status" value="1"/>
</dbReference>
<dbReference type="PROSITE" id="PS50164">
    <property type="entry name" value="GIY_YIG"/>
    <property type="match status" value="1"/>
</dbReference>
<dbReference type="PROSITE" id="PS50151">
    <property type="entry name" value="UVR"/>
    <property type="match status" value="1"/>
</dbReference>
<dbReference type="PROSITE" id="PS50165">
    <property type="entry name" value="UVRC"/>
    <property type="match status" value="1"/>
</dbReference>
<feature type="chain" id="PRO_1000077827" description="UvrABC system protein C">
    <location>
        <begin position="1"/>
        <end position="639"/>
    </location>
</feature>
<feature type="domain" description="GIY-YIG" evidence="1">
    <location>
        <begin position="20"/>
        <end position="97"/>
    </location>
</feature>
<feature type="domain" description="UVR" evidence="1">
    <location>
        <begin position="207"/>
        <end position="242"/>
    </location>
</feature>
<gene>
    <name evidence="1" type="primary">uvrC</name>
    <name type="ordered locus">RrIowa_1026</name>
</gene>
<name>UVRC_RICRO</name>
<evidence type="ECO:0000255" key="1">
    <source>
        <dbReference type="HAMAP-Rule" id="MF_00203"/>
    </source>
</evidence>
<protein>
    <recommendedName>
        <fullName evidence="1">UvrABC system protein C</fullName>
        <shortName evidence="1">Protein UvrC</shortName>
    </recommendedName>
    <alternativeName>
        <fullName evidence="1">Excinuclease ABC subunit C</fullName>
    </alternativeName>
</protein>